<feature type="chain" id="PRO_1000048334" description="Glutaminase">
    <location>
        <begin position="1"/>
        <end position="311"/>
    </location>
</feature>
<feature type="binding site" evidence="1">
    <location>
        <position position="69"/>
    </location>
    <ligand>
        <name>substrate</name>
    </ligand>
</feature>
<feature type="binding site" evidence="1">
    <location>
        <position position="120"/>
    </location>
    <ligand>
        <name>substrate</name>
    </ligand>
</feature>
<feature type="binding site" evidence="1">
    <location>
        <position position="164"/>
    </location>
    <ligand>
        <name>substrate</name>
    </ligand>
</feature>
<feature type="binding site" evidence="1">
    <location>
        <position position="171"/>
    </location>
    <ligand>
        <name>substrate</name>
    </ligand>
</feature>
<feature type="binding site" evidence="1">
    <location>
        <position position="195"/>
    </location>
    <ligand>
        <name>substrate</name>
    </ligand>
</feature>
<feature type="binding site" evidence="1">
    <location>
        <position position="247"/>
    </location>
    <ligand>
        <name>substrate</name>
    </ligand>
</feature>
<feature type="binding site" evidence="1">
    <location>
        <position position="265"/>
    </location>
    <ligand>
        <name>substrate</name>
    </ligand>
</feature>
<accession>Q47UZ9</accession>
<proteinExistence type="inferred from homology"/>
<evidence type="ECO:0000255" key="1">
    <source>
        <dbReference type="HAMAP-Rule" id="MF_00313"/>
    </source>
</evidence>
<protein>
    <recommendedName>
        <fullName evidence="1">Glutaminase</fullName>
        <ecNumber evidence="1">3.5.1.2</ecNumber>
    </recommendedName>
</protein>
<comment type="catalytic activity">
    <reaction evidence="1">
        <text>L-glutamine + H2O = L-glutamate + NH4(+)</text>
        <dbReference type="Rhea" id="RHEA:15889"/>
        <dbReference type="ChEBI" id="CHEBI:15377"/>
        <dbReference type="ChEBI" id="CHEBI:28938"/>
        <dbReference type="ChEBI" id="CHEBI:29985"/>
        <dbReference type="ChEBI" id="CHEBI:58359"/>
        <dbReference type="EC" id="3.5.1.2"/>
    </reaction>
</comment>
<comment type="subunit">
    <text evidence="1">Homotetramer.</text>
</comment>
<comment type="similarity">
    <text evidence="1">Belongs to the glutaminase family.</text>
</comment>
<gene>
    <name evidence="1" type="primary">glsA</name>
    <name type="ordered locus">CPS_4729</name>
</gene>
<organism>
    <name type="scientific">Colwellia psychrerythraea (strain 34H / ATCC BAA-681)</name>
    <name type="common">Vibrio psychroerythus</name>
    <dbReference type="NCBI Taxonomy" id="167879"/>
    <lineage>
        <taxon>Bacteria</taxon>
        <taxon>Pseudomonadati</taxon>
        <taxon>Pseudomonadota</taxon>
        <taxon>Gammaproteobacteria</taxon>
        <taxon>Alteromonadales</taxon>
        <taxon>Colwelliaceae</taxon>
        <taxon>Colwellia</taxon>
    </lineage>
</organism>
<reference key="1">
    <citation type="journal article" date="2005" name="Proc. Natl. Acad. Sci. U.S.A.">
        <title>The psychrophilic lifestyle as revealed by the genome sequence of Colwellia psychrerythraea 34H through genomic and proteomic analyses.</title>
        <authorList>
            <person name="Methe B.A."/>
            <person name="Nelson K.E."/>
            <person name="Deming J.W."/>
            <person name="Momen B."/>
            <person name="Melamud E."/>
            <person name="Zhang X."/>
            <person name="Moult J."/>
            <person name="Madupu R."/>
            <person name="Nelson W.C."/>
            <person name="Dodson R.J."/>
            <person name="Brinkac L.M."/>
            <person name="Daugherty S.C."/>
            <person name="Durkin A.S."/>
            <person name="DeBoy R.T."/>
            <person name="Kolonay J.F."/>
            <person name="Sullivan S.A."/>
            <person name="Zhou L."/>
            <person name="Davidsen T.M."/>
            <person name="Wu M."/>
            <person name="Huston A.L."/>
            <person name="Lewis M."/>
            <person name="Weaver B."/>
            <person name="Weidman J.F."/>
            <person name="Khouri H."/>
            <person name="Utterback T.R."/>
            <person name="Feldblyum T.V."/>
            <person name="Fraser C.M."/>
        </authorList>
    </citation>
    <scope>NUCLEOTIDE SEQUENCE [LARGE SCALE GENOMIC DNA]</scope>
    <source>
        <strain>34H / ATCC BAA-681</strain>
    </source>
</reference>
<sequence length="311" mass="33372">MAKSPQQPVIQSILDDAYHKFENDTSGKNADYIPALAKVDSAYFGLAVVTPHGKIYTKGDVSQPFSIQSISKVFTLALAMEQKGPQTIVDKIGVNATGLAFNSVTAIELNKARSVNPLVNAGAIATVSLLDGKNEKAKWSALSAWYDKFANRKLSVLEDVYKSESDTNGHNRAIAELLTSYDRFYGDVDLNLAIYTRQCSVAVTTKDLAVMASVFANNGVHPLTDKRLMSSDNVSRVLAVMTTAGLYENSGQWAYQVGLPAKSGVGGGIIAVSPGKFAVAVFSPRLDSAGNSIRAQKAIDYIAEKLHANIF</sequence>
<dbReference type="EC" id="3.5.1.2" evidence="1"/>
<dbReference type="EMBL" id="CP000083">
    <property type="protein sequence ID" value="AAZ24857.1"/>
    <property type="molecule type" value="Genomic_DNA"/>
</dbReference>
<dbReference type="SMR" id="Q47UZ9"/>
<dbReference type="STRING" id="167879.CPS_4729"/>
<dbReference type="KEGG" id="cps:CPS_4729"/>
<dbReference type="HOGENOM" id="CLU_027932_1_0_6"/>
<dbReference type="Proteomes" id="UP000000547">
    <property type="component" value="Chromosome"/>
</dbReference>
<dbReference type="GO" id="GO:0004359">
    <property type="term" value="F:glutaminase activity"/>
    <property type="evidence" value="ECO:0007669"/>
    <property type="project" value="UniProtKB-UniRule"/>
</dbReference>
<dbReference type="GO" id="GO:0006537">
    <property type="term" value="P:glutamate biosynthetic process"/>
    <property type="evidence" value="ECO:0007669"/>
    <property type="project" value="TreeGrafter"/>
</dbReference>
<dbReference type="GO" id="GO:0006543">
    <property type="term" value="P:glutamine catabolic process"/>
    <property type="evidence" value="ECO:0007669"/>
    <property type="project" value="TreeGrafter"/>
</dbReference>
<dbReference type="FunFam" id="3.40.710.10:FF:000005">
    <property type="entry name" value="Glutaminase"/>
    <property type="match status" value="1"/>
</dbReference>
<dbReference type="Gene3D" id="3.40.710.10">
    <property type="entry name" value="DD-peptidase/beta-lactamase superfamily"/>
    <property type="match status" value="1"/>
</dbReference>
<dbReference type="HAMAP" id="MF_00313">
    <property type="entry name" value="Glutaminase"/>
    <property type="match status" value="1"/>
</dbReference>
<dbReference type="InterPro" id="IPR012338">
    <property type="entry name" value="Beta-lactam/transpept-like"/>
</dbReference>
<dbReference type="InterPro" id="IPR015868">
    <property type="entry name" value="Glutaminase"/>
</dbReference>
<dbReference type="NCBIfam" id="TIGR03814">
    <property type="entry name" value="Gln_ase"/>
    <property type="match status" value="1"/>
</dbReference>
<dbReference type="NCBIfam" id="NF009020">
    <property type="entry name" value="PRK12356.1"/>
    <property type="match status" value="1"/>
</dbReference>
<dbReference type="PANTHER" id="PTHR12544">
    <property type="entry name" value="GLUTAMINASE"/>
    <property type="match status" value="1"/>
</dbReference>
<dbReference type="PANTHER" id="PTHR12544:SF48">
    <property type="entry name" value="GLUTAMINASE 1"/>
    <property type="match status" value="1"/>
</dbReference>
<dbReference type="Pfam" id="PF04960">
    <property type="entry name" value="Glutaminase"/>
    <property type="match status" value="1"/>
</dbReference>
<dbReference type="SUPFAM" id="SSF56601">
    <property type="entry name" value="beta-lactamase/transpeptidase-like"/>
    <property type="match status" value="1"/>
</dbReference>
<name>GLSA_COLP3</name>
<keyword id="KW-0378">Hydrolase</keyword>